<proteinExistence type="inferred from homology"/>
<accession>A1U6L6</accession>
<reference key="1">
    <citation type="journal article" date="2011" name="Appl. Environ. Microbiol.">
        <title>Genomic potential of Marinobacter aquaeolei, a biogeochemical 'opportunitroph'.</title>
        <authorList>
            <person name="Singer E."/>
            <person name="Webb E.A."/>
            <person name="Nelson W.C."/>
            <person name="Heidelberg J.F."/>
            <person name="Ivanova N."/>
            <person name="Pati A."/>
            <person name="Edwards K.J."/>
        </authorList>
    </citation>
    <scope>NUCLEOTIDE SEQUENCE [LARGE SCALE GENOMIC DNA]</scope>
    <source>
        <strain>ATCC 700491 / DSM 11845 / VT8</strain>
    </source>
</reference>
<gene>
    <name evidence="1" type="primary">rpmG</name>
    <name type="ordered locus">Maqu_3566</name>
</gene>
<organism>
    <name type="scientific">Marinobacter nauticus (strain ATCC 700491 / DSM 11845 / VT8)</name>
    <name type="common">Marinobacter aquaeolei</name>
    <dbReference type="NCBI Taxonomy" id="351348"/>
    <lineage>
        <taxon>Bacteria</taxon>
        <taxon>Pseudomonadati</taxon>
        <taxon>Pseudomonadota</taxon>
        <taxon>Gammaproteobacteria</taxon>
        <taxon>Pseudomonadales</taxon>
        <taxon>Marinobacteraceae</taxon>
        <taxon>Marinobacter</taxon>
    </lineage>
</organism>
<sequence length="51" mass="5989">MREKIKLVSSAGTGHFYTTKKNKRNTPEKIEIKKYDPVVRKHVAYKEAKIK</sequence>
<evidence type="ECO:0000255" key="1">
    <source>
        <dbReference type="HAMAP-Rule" id="MF_00294"/>
    </source>
</evidence>
<evidence type="ECO:0000305" key="2"/>
<comment type="similarity">
    <text evidence="1">Belongs to the bacterial ribosomal protein bL33 family.</text>
</comment>
<feature type="chain" id="PRO_0000356535" description="Large ribosomal subunit protein bL33">
    <location>
        <begin position="1"/>
        <end position="51"/>
    </location>
</feature>
<dbReference type="EMBL" id="CP000514">
    <property type="protein sequence ID" value="ABM20635.1"/>
    <property type="molecule type" value="Genomic_DNA"/>
</dbReference>
<dbReference type="RefSeq" id="WP_008173465.1">
    <property type="nucleotide sequence ID" value="NC_008740.1"/>
</dbReference>
<dbReference type="SMR" id="A1U6L6"/>
<dbReference type="STRING" id="351348.Maqu_3566"/>
<dbReference type="GeneID" id="94725387"/>
<dbReference type="KEGG" id="maq:Maqu_3566"/>
<dbReference type="eggNOG" id="COG0267">
    <property type="taxonomic scope" value="Bacteria"/>
</dbReference>
<dbReference type="HOGENOM" id="CLU_190949_1_1_6"/>
<dbReference type="OrthoDB" id="21586at2"/>
<dbReference type="Proteomes" id="UP000000998">
    <property type="component" value="Chromosome"/>
</dbReference>
<dbReference type="GO" id="GO:0022625">
    <property type="term" value="C:cytosolic large ribosomal subunit"/>
    <property type="evidence" value="ECO:0007669"/>
    <property type="project" value="TreeGrafter"/>
</dbReference>
<dbReference type="GO" id="GO:0003735">
    <property type="term" value="F:structural constituent of ribosome"/>
    <property type="evidence" value="ECO:0007669"/>
    <property type="project" value="InterPro"/>
</dbReference>
<dbReference type="GO" id="GO:0006412">
    <property type="term" value="P:translation"/>
    <property type="evidence" value="ECO:0007669"/>
    <property type="project" value="UniProtKB-UniRule"/>
</dbReference>
<dbReference type="FunFam" id="2.20.28.120:FF:000001">
    <property type="entry name" value="50S ribosomal protein L33"/>
    <property type="match status" value="1"/>
</dbReference>
<dbReference type="Gene3D" id="2.20.28.120">
    <property type="entry name" value="Ribosomal protein L33"/>
    <property type="match status" value="1"/>
</dbReference>
<dbReference type="HAMAP" id="MF_00294">
    <property type="entry name" value="Ribosomal_bL33"/>
    <property type="match status" value="1"/>
</dbReference>
<dbReference type="InterPro" id="IPR001705">
    <property type="entry name" value="Ribosomal_bL33"/>
</dbReference>
<dbReference type="InterPro" id="IPR018264">
    <property type="entry name" value="Ribosomal_bL33_CS"/>
</dbReference>
<dbReference type="InterPro" id="IPR038584">
    <property type="entry name" value="Ribosomal_bL33_sf"/>
</dbReference>
<dbReference type="InterPro" id="IPR011332">
    <property type="entry name" value="Ribosomal_zn-bd"/>
</dbReference>
<dbReference type="NCBIfam" id="NF001860">
    <property type="entry name" value="PRK00595.1"/>
    <property type="match status" value="1"/>
</dbReference>
<dbReference type="NCBIfam" id="TIGR01023">
    <property type="entry name" value="rpmG_bact"/>
    <property type="match status" value="1"/>
</dbReference>
<dbReference type="PANTHER" id="PTHR15238">
    <property type="entry name" value="54S RIBOSOMAL PROTEIN L39, MITOCHONDRIAL"/>
    <property type="match status" value="1"/>
</dbReference>
<dbReference type="PANTHER" id="PTHR15238:SF1">
    <property type="entry name" value="LARGE RIBOSOMAL SUBUNIT PROTEIN BL33M"/>
    <property type="match status" value="1"/>
</dbReference>
<dbReference type="Pfam" id="PF00471">
    <property type="entry name" value="Ribosomal_L33"/>
    <property type="match status" value="1"/>
</dbReference>
<dbReference type="SUPFAM" id="SSF57829">
    <property type="entry name" value="Zn-binding ribosomal proteins"/>
    <property type="match status" value="1"/>
</dbReference>
<dbReference type="PROSITE" id="PS00582">
    <property type="entry name" value="RIBOSOMAL_L33"/>
    <property type="match status" value="1"/>
</dbReference>
<name>RL33_MARN8</name>
<protein>
    <recommendedName>
        <fullName evidence="1">Large ribosomal subunit protein bL33</fullName>
    </recommendedName>
    <alternativeName>
        <fullName evidence="2">50S ribosomal protein L33</fullName>
    </alternativeName>
</protein>
<keyword id="KW-0687">Ribonucleoprotein</keyword>
<keyword id="KW-0689">Ribosomal protein</keyword>